<protein>
    <recommendedName>
        <fullName evidence="1">tRNA-2-methylthio-N(6)-dimethylallyladenosine synthase</fullName>
        <ecNumber evidence="1">2.8.4.3</ecNumber>
    </recommendedName>
    <alternativeName>
        <fullName evidence="1">(Dimethylallyl)adenosine tRNA methylthiotransferase MiaB</fullName>
    </alternativeName>
    <alternativeName>
        <fullName evidence="1">tRNA-i(6)A37 methylthiotransferase</fullName>
    </alternativeName>
</protein>
<reference key="1">
    <citation type="journal article" date="2006" name="Genome Biol.">
        <title>Genomic analysis reveals that Pseudomonas aeruginosa virulence is combinatorial.</title>
        <authorList>
            <person name="Lee D.G."/>
            <person name="Urbach J.M."/>
            <person name="Wu G."/>
            <person name="Liberati N.T."/>
            <person name="Feinbaum R.L."/>
            <person name="Miyata S."/>
            <person name="Diggins L.T."/>
            <person name="He J."/>
            <person name="Saucier M."/>
            <person name="Deziel E."/>
            <person name="Friedman L."/>
            <person name="Li L."/>
            <person name="Grills G."/>
            <person name="Montgomery K."/>
            <person name="Kucherlapati R."/>
            <person name="Rahme L.G."/>
            <person name="Ausubel F.M."/>
        </authorList>
    </citation>
    <scope>NUCLEOTIDE SEQUENCE [LARGE SCALE GENOMIC DNA]</scope>
    <source>
        <strain>UCBPP-PA14</strain>
    </source>
</reference>
<organism>
    <name type="scientific">Pseudomonas aeruginosa (strain UCBPP-PA14)</name>
    <dbReference type="NCBI Taxonomy" id="208963"/>
    <lineage>
        <taxon>Bacteria</taxon>
        <taxon>Pseudomonadati</taxon>
        <taxon>Pseudomonadota</taxon>
        <taxon>Gammaproteobacteria</taxon>
        <taxon>Pseudomonadales</taxon>
        <taxon>Pseudomonadaceae</taxon>
        <taxon>Pseudomonas</taxon>
    </lineage>
</organism>
<comment type="function">
    <text evidence="1">Catalyzes the methylthiolation of N6-(dimethylallyl)adenosine (i(6)A), leading to the formation of 2-methylthio-N6-(dimethylallyl)adenosine (ms(2)i(6)A) at position 37 in tRNAs that read codons beginning with uridine.</text>
</comment>
<comment type="catalytic activity">
    <reaction evidence="1">
        <text>N(6)-dimethylallyladenosine(37) in tRNA + (sulfur carrier)-SH + AH2 + 2 S-adenosyl-L-methionine = 2-methylsulfanyl-N(6)-dimethylallyladenosine(37) in tRNA + (sulfur carrier)-H + 5'-deoxyadenosine + L-methionine + A + S-adenosyl-L-homocysteine + 2 H(+)</text>
        <dbReference type="Rhea" id="RHEA:37067"/>
        <dbReference type="Rhea" id="RHEA-COMP:10375"/>
        <dbReference type="Rhea" id="RHEA-COMP:10376"/>
        <dbReference type="Rhea" id="RHEA-COMP:14737"/>
        <dbReference type="Rhea" id="RHEA-COMP:14739"/>
        <dbReference type="ChEBI" id="CHEBI:13193"/>
        <dbReference type="ChEBI" id="CHEBI:15378"/>
        <dbReference type="ChEBI" id="CHEBI:17319"/>
        <dbReference type="ChEBI" id="CHEBI:17499"/>
        <dbReference type="ChEBI" id="CHEBI:29917"/>
        <dbReference type="ChEBI" id="CHEBI:57844"/>
        <dbReference type="ChEBI" id="CHEBI:57856"/>
        <dbReference type="ChEBI" id="CHEBI:59789"/>
        <dbReference type="ChEBI" id="CHEBI:64428"/>
        <dbReference type="ChEBI" id="CHEBI:74415"/>
        <dbReference type="ChEBI" id="CHEBI:74417"/>
        <dbReference type="EC" id="2.8.4.3"/>
    </reaction>
</comment>
<comment type="cofactor">
    <cofactor evidence="1">
        <name>[4Fe-4S] cluster</name>
        <dbReference type="ChEBI" id="CHEBI:49883"/>
    </cofactor>
    <text evidence="1">Binds 2 [4Fe-4S] clusters. One cluster is coordinated with 3 cysteines and an exchangeable S-adenosyl-L-methionine.</text>
</comment>
<comment type="subunit">
    <text evidence="1">Monomer.</text>
</comment>
<comment type="subcellular location">
    <subcellularLocation>
        <location evidence="1">Cytoplasm</location>
    </subcellularLocation>
</comment>
<comment type="similarity">
    <text evidence="1">Belongs to the methylthiotransferase family. MiaB subfamily.</text>
</comment>
<proteinExistence type="inferred from homology"/>
<accession>Q02SE8</accession>
<dbReference type="EC" id="2.8.4.3" evidence="1"/>
<dbReference type="EMBL" id="CP000438">
    <property type="protein sequence ID" value="ABJ13255.1"/>
    <property type="molecule type" value="Genomic_DNA"/>
</dbReference>
<dbReference type="RefSeq" id="WP_003093158.1">
    <property type="nucleotide sequence ID" value="NZ_CP034244.1"/>
</dbReference>
<dbReference type="SMR" id="Q02SE8"/>
<dbReference type="KEGG" id="pau:PA14_12350"/>
<dbReference type="PseudoCAP" id="PA14_12350"/>
<dbReference type="HOGENOM" id="CLU_018697_2_0_6"/>
<dbReference type="BioCyc" id="PAER208963:G1G74-1024-MONOMER"/>
<dbReference type="Proteomes" id="UP000000653">
    <property type="component" value="Chromosome"/>
</dbReference>
<dbReference type="GO" id="GO:0005829">
    <property type="term" value="C:cytosol"/>
    <property type="evidence" value="ECO:0007669"/>
    <property type="project" value="TreeGrafter"/>
</dbReference>
<dbReference type="GO" id="GO:0051539">
    <property type="term" value="F:4 iron, 4 sulfur cluster binding"/>
    <property type="evidence" value="ECO:0007669"/>
    <property type="project" value="UniProtKB-UniRule"/>
</dbReference>
<dbReference type="GO" id="GO:0046872">
    <property type="term" value="F:metal ion binding"/>
    <property type="evidence" value="ECO:0007669"/>
    <property type="project" value="UniProtKB-KW"/>
</dbReference>
<dbReference type="GO" id="GO:0035597">
    <property type="term" value="F:N6-isopentenyladenosine methylthiotransferase activity"/>
    <property type="evidence" value="ECO:0007669"/>
    <property type="project" value="TreeGrafter"/>
</dbReference>
<dbReference type="CDD" id="cd01335">
    <property type="entry name" value="Radical_SAM"/>
    <property type="match status" value="1"/>
</dbReference>
<dbReference type="FunFam" id="3.40.50.12160:FF:000001">
    <property type="entry name" value="tRNA-2-methylthio-N(6)-dimethylallyladenosine synthase"/>
    <property type="match status" value="1"/>
</dbReference>
<dbReference type="FunFam" id="3.80.30.20:FF:000001">
    <property type="entry name" value="tRNA-2-methylthio-N(6)-dimethylallyladenosine synthase 2"/>
    <property type="match status" value="1"/>
</dbReference>
<dbReference type="Gene3D" id="3.40.50.12160">
    <property type="entry name" value="Methylthiotransferase, N-terminal domain"/>
    <property type="match status" value="1"/>
</dbReference>
<dbReference type="Gene3D" id="3.80.30.20">
    <property type="entry name" value="tm_1862 like domain"/>
    <property type="match status" value="1"/>
</dbReference>
<dbReference type="HAMAP" id="MF_01864">
    <property type="entry name" value="tRNA_metthiotr_MiaB"/>
    <property type="match status" value="1"/>
</dbReference>
<dbReference type="InterPro" id="IPR006638">
    <property type="entry name" value="Elp3/MiaA/NifB-like_rSAM"/>
</dbReference>
<dbReference type="InterPro" id="IPR005839">
    <property type="entry name" value="Methylthiotransferase"/>
</dbReference>
<dbReference type="InterPro" id="IPR020612">
    <property type="entry name" value="Methylthiotransferase_CS"/>
</dbReference>
<dbReference type="InterPro" id="IPR013848">
    <property type="entry name" value="Methylthiotransferase_N"/>
</dbReference>
<dbReference type="InterPro" id="IPR038135">
    <property type="entry name" value="Methylthiotransferase_N_sf"/>
</dbReference>
<dbReference type="InterPro" id="IPR006463">
    <property type="entry name" value="MiaB_methiolase"/>
</dbReference>
<dbReference type="InterPro" id="IPR007197">
    <property type="entry name" value="rSAM"/>
</dbReference>
<dbReference type="InterPro" id="IPR023404">
    <property type="entry name" value="rSAM_horseshoe"/>
</dbReference>
<dbReference type="InterPro" id="IPR002792">
    <property type="entry name" value="TRAM_dom"/>
</dbReference>
<dbReference type="NCBIfam" id="TIGR01574">
    <property type="entry name" value="miaB-methiolase"/>
    <property type="match status" value="1"/>
</dbReference>
<dbReference type="NCBIfam" id="TIGR00089">
    <property type="entry name" value="MiaB/RimO family radical SAM methylthiotransferase"/>
    <property type="match status" value="1"/>
</dbReference>
<dbReference type="PANTHER" id="PTHR43020">
    <property type="entry name" value="CDK5 REGULATORY SUBUNIT-ASSOCIATED PROTEIN 1"/>
    <property type="match status" value="1"/>
</dbReference>
<dbReference type="PANTHER" id="PTHR43020:SF2">
    <property type="entry name" value="MITOCHONDRIAL TRNA METHYLTHIOTRANSFERASE CDK5RAP1"/>
    <property type="match status" value="1"/>
</dbReference>
<dbReference type="Pfam" id="PF04055">
    <property type="entry name" value="Radical_SAM"/>
    <property type="match status" value="1"/>
</dbReference>
<dbReference type="Pfam" id="PF01938">
    <property type="entry name" value="TRAM"/>
    <property type="match status" value="1"/>
</dbReference>
<dbReference type="Pfam" id="PF00919">
    <property type="entry name" value="UPF0004"/>
    <property type="match status" value="1"/>
</dbReference>
<dbReference type="SFLD" id="SFLDF00273">
    <property type="entry name" value="(dimethylallyl)adenosine_tRNA"/>
    <property type="match status" value="1"/>
</dbReference>
<dbReference type="SFLD" id="SFLDG01082">
    <property type="entry name" value="B12-binding_domain_containing"/>
    <property type="match status" value="1"/>
</dbReference>
<dbReference type="SFLD" id="SFLDS00029">
    <property type="entry name" value="Radical_SAM"/>
    <property type="match status" value="1"/>
</dbReference>
<dbReference type="SMART" id="SM00729">
    <property type="entry name" value="Elp3"/>
    <property type="match status" value="1"/>
</dbReference>
<dbReference type="SUPFAM" id="SSF102114">
    <property type="entry name" value="Radical SAM enzymes"/>
    <property type="match status" value="1"/>
</dbReference>
<dbReference type="PROSITE" id="PS51449">
    <property type="entry name" value="MTTASE_N"/>
    <property type="match status" value="1"/>
</dbReference>
<dbReference type="PROSITE" id="PS01278">
    <property type="entry name" value="MTTASE_RADICAL"/>
    <property type="match status" value="1"/>
</dbReference>
<dbReference type="PROSITE" id="PS51918">
    <property type="entry name" value="RADICAL_SAM"/>
    <property type="match status" value="1"/>
</dbReference>
<dbReference type="PROSITE" id="PS50926">
    <property type="entry name" value="TRAM"/>
    <property type="match status" value="1"/>
</dbReference>
<sequence>MAKKLFIETHGCQMNEYDSSRMADLLGEHQALEVTENAAEADVILLNTCSIREKAQEKVFSKLGMWRELKQQNPDLVIGVGGCVASQEGAAIRERAPYVDVVFGPQTLHRLPEMIDAARSTRKPQVDVSFPEIEKFDRLPEPRVDGPTAFVSVMEGCSKYCSFCVVPYTRGEEVSRPFDDVIAEVIHLAENGVREVTLLGQNVNGFRGLTHDGRLADFAELLRVVAAVDGIERIRYTTSHPLEFSDALIQAHAEVPELVKFIHLPVQSGSDRVLAAMKRNHTVLEYKSRIRKLKAAVPDICISSDFIVGFPGETEKDFEQTMKLVEDVGFDFSFSFIYSARPGTPAADLADDLPEEVKKQRLQILQSRIHQQGYEISRRMVGSTQRILVTDFSKKDPGMLQGRTENNRIVNFRCDNPRLIGQFAQVHIDDALPHSLRGTLIDSTLH</sequence>
<name>MIAB_PSEAB</name>
<evidence type="ECO:0000255" key="1">
    <source>
        <dbReference type="HAMAP-Rule" id="MF_01864"/>
    </source>
</evidence>
<evidence type="ECO:0000255" key="2">
    <source>
        <dbReference type="PROSITE-ProRule" id="PRU01266"/>
    </source>
</evidence>
<feature type="chain" id="PRO_0000374463" description="tRNA-2-methylthio-N(6)-dimethylallyladenosine synthase">
    <location>
        <begin position="1"/>
        <end position="446"/>
    </location>
</feature>
<feature type="domain" description="MTTase N-terminal" evidence="1">
    <location>
        <begin position="3"/>
        <end position="120"/>
    </location>
</feature>
<feature type="domain" description="Radical SAM core" evidence="2">
    <location>
        <begin position="143"/>
        <end position="375"/>
    </location>
</feature>
<feature type="domain" description="TRAM" evidence="1">
    <location>
        <begin position="378"/>
        <end position="442"/>
    </location>
</feature>
<feature type="binding site" evidence="1">
    <location>
        <position position="12"/>
    </location>
    <ligand>
        <name>[4Fe-4S] cluster</name>
        <dbReference type="ChEBI" id="CHEBI:49883"/>
        <label>1</label>
    </ligand>
</feature>
<feature type="binding site" evidence="1">
    <location>
        <position position="49"/>
    </location>
    <ligand>
        <name>[4Fe-4S] cluster</name>
        <dbReference type="ChEBI" id="CHEBI:49883"/>
        <label>1</label>
    </ligand>
</feature>
<feature type="binding site" evidence="1">
    <location>
        <position position="83"/>
    </location>
    <ligand>
        <name>[4Fe-4S] cluster</name>
        <dbReference type="ChEBI" id="CHEBI:49883"/>
        <label>1</label>
    </ligand>
</feature>
<feature type="binding site" evidence="1">
    <location>
        <position position="157"/>
    </location>
    <ligand>
        <name>[4Fe-4S] cluster</name>
        <dbReference type="ChEBI" id="CHEBI:49883"/>
        <label>2</label>
        <note>4Fe-4S-S-AdoMet</note>
    </ligand>
</feature>
<feature type="binding site" evidence="1">
    <location>
        <position position="161"/>
    </location>
    <ligand>
        <name>[4Fe-4S] cluster</name>
        <dbReference type="ChEBI" id="CHEBI:49883"/>
        <label>2</label>
        <note>4Fe-4S-S-AdoMet</note>
    </ligand>
</feature>
<feature type="binding site" evidence="1">
    <location>
        <position position="164"/>
    </location>
    <ligand>
        <name>[4Fe-4S] cluster</name>
        <dbReference type="ChEBI" id="CHEBI:49883"/>
        <label>2</label>
        <note>4Fe-4S-S-AdoMet</note>
    </ligand>
</feature>
<gene>
    <name evidence="1" type="primary">miaB</name>
    <name type="ordered locus">PA14_12350</name>
</gene>
<keyword id="KW-0004">4Fe-4S</keyword>
<keyword id="KW-0963">Cytoplasm</keyword>
<keyword id="KW-0408">Iron</keyword>
<keyword id="KW-0411">Iron-sulfur</keyword>
<keyword id="KW-0479">Metal-binding</keyword>
<keyword id="KW-0949">S-adenosyl-L-methionine</keyword>
<keyword id="KW-0808">Transferase</keyword>
<keyword id="KW-0819">tRNA processing</keyword>